<accession>Q25306</accession>
<keyword id="KW-0677">Repeat</keyword>
<keyword id="KW-0687">Ribonucleoprotein</keyword>
<keyword id="KW-0689">Ribosomal protein</keyword>
<keyword id="KW-0853">WD repeat</keyword>
<proteinExistence type="evidence at transcript level"/>
<sequence length="312" mass="34414">MNYEGHLKGHRGWVTSLACPQQAGSYIKVVSTSRDGTVISWKANPDRHSVDSDYGLPNHRLEGHTGFVSCVSLAHATDYALTASWDRSIRMWDLRNGQCQRKFLKHTKDVLAVAFSPDDRLIVSAGRDNVIRVWNVAGECMHEFLRDGHEDWVSSICFSPSLEHPIVVSGSWDNTIKVWNVNGGKCERTLKGHSNYVSTVTVSPDGSLCASGGKDGAALLWDLSTGEQLFKINVESPINQIGFSPNRFWMCVATERSLSVYDLESKAVIAELTPDGAKPSECISIAWSADGNTLYSGHKDNLIRVWSISDAE</sequence>
<protein>
    <recommendedName>
        <fullName evidence="1">Small ribosomal subunit protein RACK1</fullName>
    </recommendedName>
    <alternativeName>
        <fullName>Antigen LACK</fullName>
    </alternativeName>
    <alternativeName>
        <fullName>Guanine nucleotide-binding protein subunit beta-like protein</fullName>
    </alternativeName>
</protein>
<dbReference type="EMBL" id="U27568">
    <property type="protein sequence ID" value="AAA97577.1"/>
    <property type="molecule type" value="mRNA"/>
</dbReference>
<dbReference type="SMR" id="Q25306"/>
<dbReference type="VEuPathDB" id="TriTrypDB:LmjF.28.2740"/>
<dbReference type="VEuPathDB" id="TriTrypDB:LMJFC_280038300"/>
<dbReference type="VEuPathDB" id="TriTrypDB:LMJLV39_280035800"/>
<dbReference type="VEuPathDB" id="TriTrypDB:LMJSD75_280035600"/>
<dbReference type="eggNOG" id="KOG0279">
    <property type="taxonomic scope" value="Eukaryota"/>
</dbReference>
<dbReference type="GO" id="GO:1990904">
    <property type="term" value="C:ribonucleoprotein complex"/>
    <property type="evidence" value="ECO:0007669"/>
    <property type="project" value="UniProtKB-KW"/>
</dbReference>
<dbReference type="GO" id="GO:0005840">
    <property type="term" value="C:ribosome"/>
    <property type="evidence" value="ECO:0007669"/>
    <property type="project" value="UniProtKB-KW"/>
</dbReference>
<dbReference type="GO" id="GO:0043022">
    <property type="term" value="F:ribosome binding"/>
    <property type="evidence" value="ECO:0007669"/>
    <property type="project" value="InterPro"/>
</dbReference>
<dbReference type="GO" id="GO:0045182">
    <property type="term" value="F:translation regulator activity"/>
    <property type="evidence" value="ECO:0007669"/>
    <property type="project" value="InterPro"/>
</dbReference>
<dbReference type="CDD" id="cd00200">
    <property type="entry name" value="WD40"/>
    <property type="match status" value="1"/>
</dbReference>
<dbReference type="FunFam" id="2.130.10.10:FF:000018">
    <property type="entry name" value="Receptor for activated C kinase 1"/>
    <property type="match status" value="1"/>
</dbReference>
<dbReference type="Gene3D" id="2.130.10.10">
    <property type="entry name" value="YVTN repeat-like/Quinoprotein amine dehydrogenase"/>
    <property type="match status" value="1"/>
</dbReference>
<dbReference type="InterPro" id="IPR020472">
    <property type="entry name" value="G-protein_beta_WD-40_rep"/>
</dbReference>
<dbReference type="InterPro" id="IPR045223">
    <property type="entry name" value="RACK1-like"/>
</dbReference>
<dbReference type="InterPro" id="IPR015943">
    <property type="entry name" value="WD40/YVTN_repeat-like_dom_sf"/>
</dbReference>
<dbReference type="InterPro" id="IPR019775">
    <property type="entry name" value="WD40_repeat_CS"/>
</dbReference>
<dbReference type="InterPro" id="IPR036322">
    <property type="entry name" value="WD40_repeat_dom_sf"/>
</dbReference>
<dbReference type="InterPro" id="IPR001680">
    <property type="entry name" value="WD40_rpt"/>
</dbReference>
<dbReference type="PANTHER" id="PTHR19868">
    <property type="entry name" value="RECEPTOR FOR ACTIVATED PROTEIN KINASE C RACK1"/>
    <property type="match status" value="1"/>
</dbReference>
<dbReference type="Pfam" id="PF00400">
    <property type="entry name" value="WD40"/>
    <property type="match status" value="6"/>
</dbReference>
<dbReference type="PRINTS" id="PR00320">
    <property type="entry name" value="GPROTEINBRPT"/>
</dbReference>
<dbReference type="SMART" id="SM00320">
    <property type="entry name" value="WD40"/>
    <property type="match status" value="7"/>
</dbReference>
<dbReference type="SUPFAM" id="SSF50978">
    <property type="entry name" value="WD40 repeat-like"/>
    <property type="match status" value="1"/>
</dbReference>
<dbReference type="PROSITE" id="PS00678">
    <property type="entry name" value="WD_REPEATS_1"/>
    <property type="match status" value="4"/>
</dbReference>
<dbReference type="PROSITE" id="PS50082">
    <property type="entry name" value="WD_REPEATS_2"/>
    <property type="match status" value="5"/>
</dbReference>
<dbReference type="PROSITE" id="PS50294">
    <property type="entry name" value="WD_REPEATS_REGION"/>
    <property type="match status" value="1"/>
</dbReference>
<organism>
    <name type="scientific">Leishmania major</name>
    <dbReference type="NCBI Taxonomy" id="5664"/>
    <lineage>
        <taxon>Eukaryota</taxon>
        <taxon>Discoba</taxon>
        <taxon>Euglenozoa</taxon>
        <taxon>Kinetoplastea</taxon>
        <taxon>Metakinetoplastina</taxon>
        <taxon>Trypanosomatida</taxon>
        <taxon>Trypanosomatidae</taxon>
        <taxon>Leishmaniinae</taxon>
        <taxon>Leishmania</taxon>
    </lineage>
</organism>
<evidence type="ECO:0000305" key="1"/>
<feature type="chain" id="PRO_0000127745" description="Small ribosomal subunit protein RACK1">
    <location>
        <begin position="1"/>
        <end position="312"/>
    </location>
</feature>
<feature type="repeat" description="WD 1">
    <location>
        <begin position="9"/>
        <end position="42"/>
    </location>
</feature>
<feature type="repeat" description="WD 2">
    <location>
        <begin position="63"/>
        <end position="93"/>
    </location>
</feature>
<feature type="repeat" description="WD 3">
    <location>
        <begin position="105"/>
        <end position="135"/>
    </location>
</feature>
<feature type="repeat" description="WD 4">
    <location>
        <begin position="148"/>
        <end position="180"/>
    </location>
</feature>
<feature type="repeat" description="WD 5">
    <location>
        <begin position="192"/>
        <end position="222"/>
    </location>
</feature>
<feature type="repeat" description="WD 6">
    <location>
        <begin position="233"/>
        <end position="262"/>
    </location>
</feature>
<feature type="repeat" description="WD 7">
    <location>
        <begin position="279"/>
        <end position="307"/>
    </location>
</feature>
<name>GBLP_LEIMA</name>
<reference key="1">
    <citation type="journal article" date="1995" name="Science">
        <title>Expression cloning of a protective Leishmania antigen.</title>
        <authorList>
            <person name="Mougneau E."/>
            <person name="Altare F."/>
            <person name="Wakil A.E."/>
            <person name="Zheng S."/>
            <person name="Coppola T."/>
            <person name="Wang Z.E."/>
            <person name="Waldmann R."/>
            <person name="Locksley R.M."/>
            <person name="Glaichenhaus N."/>
        </authorList>
    </citation>
    <scope>NUCLEOTIDE SEQUENCE [MRNA]</scope>
</reference>
<comment type="developmental stage">
    <text>Expressed in both stages of the parasite life cycle.</text>
</comment>
<comment type="similarity">
    <text evidence="1">Belongs to the WD repeat G protein beta family. Ribosomal protein RACK1 subfamily.</text>
</comment>